<gene>
    <name evidence="1" type="primary">efp</name>
    <name type="ordered locus">CLH_2182</name>
</gene>
<accession>B2V4S9</accession>
<sequence>MISAGDLRKGVTFEFDGQVFTVTDFLHVKPGKGAAFVRTKLRNVISGGVVDRTFNPTEKLQEAVIERKEMQYLYSDGELYYFMDQETFEQIPLNAEKVEDAIKYLKENMFAVIKFFKGSAFSVEAPNFVELQITYTEPGVKGNTATNSLKPATVETGAIINVPMFVNDGDVIRIDTRTGEYMERV</sequence>
<name>EFP_CLOBA</name>
<reference key="1">
    <citation type="submission" date="2008-05" db="EMBL/GenBank/DDBJ databases">
        <title>Complete genome sequence of Clostridium botulinum E3 str. Alaska E43.</title>
        <authorList>
            <person name="Brinkac L.M."/>
            <person name="Brown J.L."/>
            <person name="Bruce D."/>
            <person name="Detter C."/>
            <person name="Munk C."/>
            <person name="Smith L.A."/>
            <person name="Smith T.J."/>
            <person name="Sutton G."/>
            <person name="Brettin T.S."/>
        </authorList>
    </citation>
    <scope>NUCLEOTIDE SEQUENCE [LARGE SCALE GENOMIC DNA]</scope>
    <source>
        <strain>Alaska E43 / Type E3</strain>
    </source>
</reference>
<protein>
    <recommendedName>
        <fullName evidence="1">Elongation factor P</fullName>
        <shortName evidence="1">EF-P</shortName>
    </recommendedName>
</protein>
<proteinExistence type="inferred from homology"/>
<feature type="chain" id="PRO_1000096137" description="Elongation factor P">
    <location>
        <begin position="1"/>
        <end position="185"/>
    </location>
</feature>
<evidence type="ECO:0000255" key="1">
    <source>
        <dbReference type="HAMAP-Rule" id="MF_00141"/>
    </source>
</evidence>
<comment type="function">
    <text evidence="1">Involved in peptide bond synthesis. Stimulates efficient translation and peptide-bond synthesis on native or reconstituted 70S ribosomes in vitro. Probably functions indirectly by altering the affinity of the ribosome for aminoacyl-tRNA, thus increasing their reactivity as acceptors for peptidyl transferase.</text>
</comment>
<comment type="pathway">
    <text evidence="1">Protein biosynthesis; polypeptide chain elongation.</text>
</comment>
<comment type="subcellular location">
    <subcellularLocation>
        <location evidence="1">Cytoplasm</location>
    </subcellularLocation>
</comment>
<comment type="similarity">
    <text evidence="1">Belongs to the elongation factor P family.</text>
</comment>
<organism>
    <name type="scientific">Clostridium botulinum (strain Alaska E43 / Type E3)</name>
    <dbReference type="NCBI Taxonomy" id="508767"/>
    <lineage>
        <taxon>Bacteria</taxon>
        <taxon>Bacillati</taxon>
        <taxon>Bacillota</taxon>
        <taxon>Clostridia</taxon>
        <taxon>Eubacteriales</taxon>
        <taxon>Clostridiaceae</taxon>
        <taxon>Clostridium</taxon>
    </lineage>
</organism>
<keyword id="KW-0963">Cytoplasm</keyword>
<keyword id="KW-0251">Elongation factor</keyword>
<keyword id="KW-0648">Protein biosynthesis</keyword>
<dbReference type="EMBL" id="CP001078">
    <property type="protein sequence ID" value="ACD52850.1"/>
    <property type="molecule type" value="Genomic_DNA"/>
</dbReference>
<dbReference type="RefSeq" id="WP_003372195.1">
    <property type="nucleotide sequence ID" value="NC_010723.1"/>
</dbReference>
<dbReference type="SMR" id="B2V4S9"/>
<dbReference type="KEGG" id="cbt:CLH_2182"/>
<dbReference type="HOGENOM" id="CLU_074944_0_1_9"/>
<dbReference type="UniPathway" id="UPA00345"/>
<dbReference type="GO" id="GO:0005737">
    <property type="term" value="C:cytoplasm"/>
    <property type="evidence" value="ECO:0007669"/>
    <property type="project" value="UniProtKB-SubCell"/>
</dbReference>
<dbReference type="GO" id="GO:0003746">
    <property type="term" value="F:translation elongation factor activity"/>
    <property type="evidence" value="ECO:0007669"/>
    <property type="project" value="UniProtKB-UniRule"/>
</dbReference>
<dbReference type="GO" id="GO:0043043">
    <property type="term" value="P:peptide biosynthetic process"/>
    <property type="evidence" value="ECO:0007669"/>
    <property type="project" value="InterPro"/>
</dbReference>
<dbReference type="CDD" id="cd04470">
    <property type="entry name" value="S1_EF-P_repeat_1"/>
    <property type="match status" value="1"/>
</dbReference>
<dbReference type="CDD" id="cd05794">
    <property type="entry name" value="S1_EF-P_repeat_2"/>
    <property type="match status" value="1"/>
</dbReference>
<dbReference type="FunFam" id="2.30.30.30:FF:000003">
    <property type="entry name" value="Elongation factor P"/>
    <property type="match status" value="1"/>
</dbReference>
<dbReference type="FunFam" id="2.40.50.140:FF:000004">
    <property type="entry name" value="Elongation factor P"/>
    <property type="match status" value="1"/>
</dbReference>
<dbReference type="FunFam" id="2.40.50.140:FF:000009">
    <property type="entry name" value="Elongation factor P"/>
    <property type="match status" value="1"/>
</dbReference>
<dbReference type="Gene3D" id="2.30.30.30">
    <property type="match status" value="1"/>
</dbReference>
<dbReference type="Gene3D" id="2.40.50.140">
    <property type="entry name" value="Nucleic acid-binding proteins"/>
    <property type="match status" value="2"/>
</dbReference>
<dbReference type="HAMAP" id="MF_00141">
    <property type="entry name" value="EF_P"/>
    <property type="match status" value="1"/>
</dbReference>
<dbReference type="InterPro" id="IPR015365">
    <property type="entry name" value="Elong-fact-P_C"/>
</dbReference>
<dbReference type="InterPro" id="IPR012340">
    <property type="entry name" value="NA-bd_OB-fold"/>
</dbReference>
<dbReference type="InterPro" id="IPR014722">
    <property type="entry name" value="Rib_uL2_dom2"/>
</dbReference>
<dbReference type="InterPro" id="IPR020599">
    <property type="entry name" value="Transl_elong_fac_P/YeiP"/>
</dbReference>
<dbReference type="InterPro" id="IPR013185">
    <property type="entry name" value="Transl_elong_KOW-like"/>
</dbReference>
<dbReference type="InterPro" id="IPR001059">
    <property type="entry name" value="Transl_elong_P/YeiP_cen"/>
</dbReference>
<dbReference type="InterPro" id="IPR013852">
    <property type="entry name" value="Transl_elong_P/YeiP_CS"/>
</dbReference>
<dbReference type="InterPro" id="IPR011768">
    <property type="entry name" value="Transl_elongation_fac_P"/>
</dbReference>
<dbReference type="InterPro" id="IPR008991">
    <property type="entry name" value="Translation_prot_SH3-like_sf"/>
</dbReference>
<dbReference type="NCBIfam" id="TIGR00038">
    <property type="entry name" value="efp"/>
    <property type="match status" value="1"/>
</dbReference>
<dbReference type="NCBIfam" id="NF001810">
    <property type="entry name" value="PRK00529.1"/>
    <property type="match status" value="1"/>
</dbReference>
<dbReference type="PANTHER" id="PTHR30053">
    <property type="entry name" value="ELONGATION FACTOR P"/>
    <property type="match status" value="1"/>
</dbReference>
<dbReference type="PANTHER" id="PTHR30053:SF12">
    <property type="entry name" value="ELONGATION FACTOR P (EF-P) FAMILY PROTEIN"/>
    <property type="match status" value="1"/>
</dbReference>
<dbReference type="Pfam" id="PF01132">
    <property type="entry name" value="EFP"/>
    <property type="match status" value="1"/>
</dbReference>
<dbReference type="Pfam" id="PF08207">
    <property type="entry name" value="EFP_N"/>
    <property type="match status" value="1"/>
</dbReference>
<dbReference type="Pfam" id="PF09285">
    <property type="entry name" value="Elong-fact-P_C"/>
    <property type="match status" value="1"/>
</dbReference>
<dbReference type="PIRSF" id="PIRSF005901">
    <property type="entry name" value="EF-P"/>
    <property type="match status" value="1"/>
</dbReference>
<dbReference type="SMART" id="SM01185">
    <property type="entry name" value="EFP"/>
    <property type="match status" value="1"/>
</dbReference>
<dbReference type="SMART" id="SM00841">
    <property type="entry name" value="Elong-fact-P_C"/>
    <property type="match status" value="1"/>
</dbReference>
<dbReference type="SUPFAM" id="SSF50249">
    <property type="entry name" value="Nucleic acid-binding proteins"/>
    <property type="match status" value="2"/>
</dbReference>
<dbReference type="SUPFAM" id="SSF50104">
    <property type="entry name" value="Translation proteins SH3-like domain"/>
    <property type="match status" value="1"/>
</dbReference>
<dbReference type="PROSITE" id="PS01275">
    <property type="entry name" value="EFP"/>
    <property type="match status" value="1"/>
</dbReference>